<sequence>MLTFIGLGLYDQKDISVKGLEAIREADVVYAEFYTSRLMGATLEDMQELYGKPVKVLMREDVEQHPKDTVLSDAVDKKVVFLTGGDAMVATTHVDLRLRAKKMGIETRLIHGASIQSAVCGLTGLQNYRFGKSATIAFPYKDIISETPYDTILMNKKNGLHTLLFLDIDREKGYMTVNRGIELLLKVEERRKEGAVAGALCVGIARAGSPSPCVRAGRIEELQAFDFGGPLHIMVMPADLHFLEEEALQDLAGLKLG</sequence>
<keyword id="KW-0489">Methyltransferase</keyword>
<keyword id="KW-1185">Reference proteome</keyword>
<keyword id="KW-0949">S-adenosyl-L-methionine</keyword>
<keyword id="KW-0808">Transferase</keyword>
<evidence type="ECO:0000255" key="1">
    <source>
        <dbReference type="HAMAP-Rule" id="MF_01084"/>
    </source>
</evidence>
<accession>Q0W085</accession>
<gene>
    <name evidence="1" type="primary">dphB</name>
    <name type="ordered locus">UNCMA_00610</name>
    <name type="ORF">RRC519</name>
</gene>
<feature type="chain" id="PRO_1000064831" description="Diphthine synthase">
    <location>
        <begin position="1"/>
        <end position="257"/>
    </location>
</feature>
<feature type="binding site" evidence="1">
    <location>
        <position position="9"/>
    </location>
    <ligand>
        <name>S-adenosyl-L-methionine</name>
        <dbReference type="ChEBI" id="CHEBI:59789"/>
    </ligand>
</feature>
<feature type="binding site" evidence="1">
    <location>
        <position position="86"/>
    </location>
    <ligand>
        <name>S-adenosyl-L-methionine</name>
        <dbReference type="ChEBI" id="CHEBI:59789"/>
    </ligand>
</feature>
<feature type="binding site" evidence="1">
    <location>
        <position position="89"/>
    </location>
    <ligand>
        <name>S-adenosyl-L-methionine</name>
        <dbReference type="ChEBI" id="CHEBI:59789"/>
    </ligand>
</feature>
<feature type="binding site" evidence="1">
    <location>
        <begin position="114"/>
        <end position="115"/>
    </location>
    <ligand>
        <name>S-adenosyl-L-methionine</name>
        <dbReference type="ChEBI" id="CHEBI:59789"/>
    </ligand>
</feature>
<feature type="binding site" evidence="1">
    <location>
        <position position="166"/>
    </location>
    <ligand>
        <name>S-adenosyl-L-methionine</name>
        <dbReference type="ChEBI" id="CHEBI:59789"/>
    </ligand>
</feature>
<feature type="binding site" evidence="1">
    <location>
        <position position="207"/>
    </location>
    <ligand>
        <name>S-adenosyl-L-methionine</name>
        <dbReference type="ChEBI" id="CHEBI:59789"/>
    </ligand>
</feature>
<feature type="binding site" evidence="1">
    <location>
        <position position="232"/>
    </location>
    <ligand>
        <name>S-adenosyl-L-methionine</name>
        <dbReference type="ChEBI" id="CHEBI:59789"/>
    </ligand>
</feature>
<reference key="1">
    <citation type="journal article" date="2006" name="Science">
        <title>Genome of rice cluster I archaea -- the key methane producers in the rice rhizosphere.</title>
        <authorList>
            <person name="Erkel C."/>
            <person name="Kube M."/>
            <person name="Reinhardt R."/>
            <person name="Liesack W."/>
        </authorList>
    </citation>
    <scope>NUCLEOTIDE SEQUENCE [LARGE SCALE GENOMIC DNA]</scope>
    <source>
        <strain>DSM 22066 / NBRC 105507 / MRE50</strain>
    </source>
</reference>
<proteinExistence type="inferred from homology"/>
<name>DPHB_METAR</name>
<dbReference type="EC" id="2.1.1.98" evidence="1"/>
<dbReference type="EMBL" id="AM114193">
    <property type="protein sequence ID" value="CAJ38208.1"/>
    <property type="molecule type" value="Genomic_DNA"/>
</dbReference>
<dbReference type="RefSeq" id="WP_012034386.1">
    <property type="nucleotide sequence ID" value="NC_009464.1"/>
</dbReference>
<dbReference type="SMR" id="Q0W085"/>
<dbReference type="STRING" id="351160.RRC519"/>
<dbReference type="GeneID" id="5143148"/>
<dbReference type="KEGG" id="rci:RRC519"/>
<dbReference type="PATRIC" id="fig|351160.9.peg.62"/>
<dbReference type="eggNOG" id="arCOG04161">
    <property type="taxonomic scope" value="Archaea"/>
</dbReference>
<dbReference type="OrthoDB" id="39139at2157"/>
<dbReference type="UniPathway" id="UPA00559"/>
<dbReference type="Proteomes" id="UP000000663">
    <property type="component" value="Chromosome"/>
</dbReference>
<dbReference type="GO" id="GO:0004164">
    <property type="term" value="F:diphthine synthase activity"/>
    <property type="evidence" value="ECO:0007669"/>
    <property type="project" value="UniProtKB-UniRule"/>
</dbReference>
<dbReference type="GO" id="GO:0032259">
    <property type="term" value="P:methylation"/>
    <property type="evidence" value="ECO:0007669"/>
    <property type="project" value="UniProtKB-KW"/>
</dbReference>
<dbReference type="GO" id="GO:0017183">
    <property type="term" value="P:protein histidyl modification to diphthamide"/>
    <property type="evidence" value="ECO:0007669"/>
    <property type="project" value="UniProtKB-UniRule"/>
</dbReference>
<dbReference type="CDD" id="cd11647">
    <property type="entry name" value="DHP5_DphB"/>
    <property type="match status" value="1"/>
</dbReference>
<dbReference type="Gene3D" id="3.40.1010.10">
    <property type="entry name" value="Cobalt-precorrin-4 Transmethylase, Domain 1"/>
    <property type="match status" value="1"/>
</dbReference>
<dbReference type="Gene3D" id="3.30.950.10">
    <property type="entry name" value="Methyltransferase, Cobalt-precorrin-4 Transmethylase, Domain 2"/>
    <property type="match status" value="1"/>
</dbReference>
<dbReference type="HAMAP" id="MF_01084">
    <property type="entry name" value="Diphthine_synth"/>
    <property type="match status" value="1"/>
</dbReference>
<dbReference type="InterPro" id="IPR000878">
    <property type="entry name" value="4pyrrol_Mease"/>
</dbReference>
<dbReference type="InterPro" id="IPR035996">
    <property type="entry name" value="4pyrrol_Methylase_sf"/>
</dbReference>
<dbReference type="InterPro" id="IPR014777">
    <property type="entry name" value="4pyrrole_Mease_sub1"/>
</dbReference>
<dbReference type="InterPro" id="IPR014776">
    <property type="entry name" value="4pyrrole_Mease_sub2"/>
</dbReference>
<dbReference type="InterPro" id="IPR004551">
    <property type="entry name" value="Dphthn_synthase"/>
</dbReference>
<dbReference type="NCBIfam" id="TIGR00522">
    <property type="entry name" value="dph5"/>
    <property type="match status" value="1"/>
</dbReference>
<dbReference type="PANTHER" id="PTHR10882:SF0">
    <property type="entry name" value="DIPHTHINE METHYL ESTER SYNTHASE"/>
    <property type="match status" value="1"/>
</dbReference>
<dbReference type="PANTHER" id="PTHR10882">
    <property type="entry name" value="DIPHTHINE SYNTHASE"/>
    <property type="match status" value="1"/>
</dbReference>
<dbReference type="Pfam" id="PF00590">
    <property type="entry name" value="TP_methylase"/>
    <property type="match status" value="1"/>
</dbReference>
<dbReference type="PIRSF" id="PIRSF036432">
    <property type="entry name" value="Diphthine_synth"/>
    <property type="match status" value="1"/>
</dbReference>
<dbReference type="SUPFAM" id="SSF53790">
    <property type="entry name" value="Tetrapyrrole methylase"/>
    <property type="match status" value="1"/>
</dbReference>
<protein>
    <recommendedName>
        <fullName evidence="1">Diphthine synthase</fullName>
        <ecNumber evidence="1">2.1.1.98</ecNumber>
    </recommendedName>
    <alternativeName>
        <fullName evidence="1">Diphthamide biosynthesis methyltransferase</fullName>
    </alternativeName>
</protein>
<organism>
    <name type="scientific">Methanocella arvoryzae (strain DSM 22066 / NBRC 105507 / MRE50)</name>
    <dbReference type="NCBI Taxonomy" id="351160"/>
    <lineage>
        <taxon>Archaea</taxon>
        <taxon>Methanobacteriati</taxon>
        <taxon>Methanobacteriota</taxon>
        <taxon>Stenosarchaea group</taxon>
        <taxon>Methanomicrobia</taxon>
        <taxon>Methanocellales</taxon>
        <taxon>Methanocellaceae</taxon>
        <taxon>Methanocella</taxon>
    </lineage>
</organism>
<comment type="function">
    <text evidence="1">S-adenosyl-L-methionine-dependent methyltransferase that catalyzes the trimethylation of the amino group of the modified target histidine residue in translation elongation factor 2 (EF-2), to form an intermediate called diphthine. The three successive methylation reactions represent the second step of diphthamide biosynthesis.</text>
</comment>
<comment type="catalytic activity">
    <reaction evidence="1">
        <text>2-[(3S)-amino-3-carboxypropyl]-L-histidyl-[translation elongation factor 2] + 3 S-adenosyl-L-methionine = diphthine-[translation elongation factor 2] + 3 S-adenosyl-L-homocysteine + 3 H(+)</text>
        <dbReference type="Rhea" id="RHEA:36415"/>
        <dbReference type="Rhea" id="RHEA-COMP:9749"/>
        <dbReference type="Rhea" id="RHEA-COMP:10172"/>
        <dbReference type="ChEBI" id="CHEBI:15378"/>
        <dbReference type="ChEBI" id="CHEBI:57856"/>
        <dbReference type="ChEBI" id="CHEBI:59789"/>
        <dbReference type="ChEBI" id="CHEBI:73995"/>
        <dbReference type="ChEBI" id="CHEBI:82696"/>
        <dbReference type="EC" id="2.1.1.98"/>
    </reaction>
</comment>
<comment type="pathway">
    <text evidence="1">Protein modification; peptidyl-diphthamide biosynthesis.</text>
</comment>
<comment type="subunit">
    <text evidence="1">Homodimer.</text>
</comment>
<comment type="similarity">
    <text evidence="1">Belongs to the diphthine synthase family.</text>
</comment>